<keyword id="KW-0030">Aminoacyl-tRNA synthetase</keyword>
<keyword id="KW-0067">ATP-binding</keyword>
<keyword id="KW-0963">Cytoplasm</keyword>
<keyword id="KW-0436">Ligase</keyword>
<keyword id="KW-0460">Magnesium</keyword>
<keyword id="KW-0479">Metal-binding</keyword>
<keyword id="KW-0547">Nucleotide-binding</keyword>
<keyword id="KW-0648">Protein biosynthesis</keyword>
<keyword id="KW-1185">Reference proteome</keyword>
<keyword id="KW-0694">RNA-binding</keyword>
<keyword id="KW-0820">tRNA-binding</keyword>
<reference key="1">
    <citation type="journal article" date="2005" name="Nucleic Acids Res.">
        <title>The genome sequence of Xanthomonas oryzae pathovar oryzae KACC10331, the bacterial blight pathogen of rice.</title>
        <authorList>
            <person name="Lee B.-M."/>
            <person name="Park Y.-J."/>
            <person name="Park D.-S."/>
            <person name="Kang H.-W."/>
            <person name="Kim J.-G."/>
            <person name="Song E.-S."/>
            <person name="Park I.-C."/>
            <person name="Yoon U.-H."/>
            <person name="Hahn J.-H."/>
            <person name="Koo B.-S."/>
            <person name="Lee G.-B."/>
            <person name="Kim H."/>
            <person name="Park H.-S."/>
            <person name="Yoon K.-O."/>
            <person name="Kim J.-H."/>
            <person name="Jung C.-H."/>
            <person name="Koh N.-H."/>
            <person name="Seo J.-S."/>
            <person name="Go S.-J."/>
        </authorList>
    </citation>
    <scope>NUCLEOTIDE SEQUENCE [LARGE SCALE GENOMIC DNA]</scope>
    <source>
        <strain>KACC10331 / KXO85</strain>
    </source>
</reference>
<gene>
    <name evidence="1" type="primary">pheT</name>
    <name type="ordered locus">XOO3182</name>
</gene>
<accession>Q5GXY5</accession>
<dbReference type="EC" id="6.1.1.20" evidence="1"/>
<dbReference type="EMBL" id="AE013598">
    <property type="protein sequence ID" value="AAW76436.1"/>
    <property type="molecule type" value="Genomic_DNA"/>
</dbReference>
<dbReference type="SMR" id="Q5GXY5"/>
<dbReference type="STRING" id="291331.XOO3182"/>
<dbReference type="KEGG" id="xoo:XOO3182"/>
<dbReference type="HOGENOM" id="CLU_016891_0_0_6"/>
<dbReference type="Proteomes" id="UP000006735">
    <property type="component" value="Chromosome"/>
</dbReference>
<dbReference type="GO" id="GO:0009328">
    <property type="term" value="C:phenylalanine-tRNA ligase complex"/>
    <property type="evidence" value="ECO:0007669"/>
    <property type="project" value="TreeGrafter"/>
</dbReference>
<dbReference type="GO" id="GO:0005524">
    <property type="term" value="F:ATP binding"/>
    <property type="evidence" value="ECO:0007669"/>
    <property type="project" value="UniProtKB-UniRule"/>
</dbReference>
<dbReference type="GO" id="GO:0000287">
    <property type="term" value="F:magnesium ion binding"/>
    <property type="evidence" value="ECO:0007669"/>
    <property type="project" value="UniProtKB-UniRule"/>
</dbReference>
<dbReference type="GO" id="GO:0004826">
    <property type="term" value="F:phenylalanine-tRNA ligase activity"/>
    <property type="evidence" value="ECO:0007669"/>
    <property type="project" value="UniProtKB-UniRule"/>
</dbReference>
<dbReference type="GO" id="GO:0000049">
    <property type="term" value="F:tRNA binding"/>
    <property type="evidence" value="ECO:0007669"/>
    <property type="project" value="UniProtKB-KW"/>
</dbReference>
<dbReference type="GO" id="GO:0006432">
    <property type="term" value="P:phenylalanyl-tRNA aminoacylation"/>
    <property type="evidence" value="ECO:0007669"/>
    <property type="project" value="UniProtKB-UniRule"/>
</dbReference>
<dbReference type="CDD" id="cd00769">
    <property type="entry name" value="PheRS_beta_core"/>
    <property type="match status" value="1"/>
</dbReference>
<dbReference type="CDD" id="cd02796">
    <property type="entry name" value="tRNA_bind_bactPheRS"/>
    <property type="match status" value="1"/>
</dbReference>
<dbReference type="FunFam" id="2.40.50.140:FF:000045">
    <property type="entry name" value="Phenylalanine--tRNA ligase beta subunit"/>
    <property type="match status" value="1"/>
</dbReference>
<dbReference type="FunFam" id="3.30.56.10:FF:000002">
    <property type="entry name" value="Phenylalanine--tRNA ligase beta subunit"/>
    <property type="match status" value="1"/>
</dbReference>
<dbReference type="FunFam" id="3.30.70.380:FF:000001">
    <property type="entry name" value="Phenylalanine--tRNA ligase beta subunit"/>
    <property type="match status" value="1"/>
</dbReference>
<dbReference type="FunFam" id="3.30.930.10:FF:000022">
    <property type="entry name" value="Phenylalanine--tRNA ligase beta subunit"/>
    <property type="match status" value="1"/>
</dbReference>
<dbReference type="FunFam" id="3.50.40.10:FF:000001">
    <property type="entry name" value="Phenylalanine--tRNA ligase beta subunit"/>
    <property type="match status" value="1"/>
</dbReference>
<dbReference type="Gene3D" id="3.30.56.10">
    <property type="match status" value="2"/>
</dbReference>
<dbReference type="Gene3D" id="3.30.930.10">
    <property type="entry name" value="Bira Bifunctional Protein, Domain 2"/>
    <property type="match status" value="1"/>
</dbReference>
<dbReference type="Gene3D" id="3.30.70.380">
    <property type="entry name" value="Ferrodoxin-fold anticodon-binding domain"/>
    <property type="match status" value="1"/>
</dbReference>
<dbReference type="Gene3D" id="2.40.50.140">
    <property type="entry name" value="Nucleic acid-binding proteins"/>
    <property type="match status" value="1"/>
</dbReference>
<dbReference type="Gene3D" id="3.50.40.10">
    <property type="entry name" value="Phenylalanyl-trna Synthetase, Chain B, domain 3"/>
    <property type="match status" value="1"/>
</dbReference>
<dbReference type="HAMAP" id="MF_00283">
    <property type="entry name" value="Phe_tRNA_synth_beta1"/>
    <property type="match status" value="1"/>
</dbReference>
<dbReference type="InterPro" id="IPR045864">
    <property type="entry name" value="aa-tRNA-synth_II/BPL/LPL"/>
</dbReference>
<dbReference type="InterPro" id="IPR005146">
    <property type="entry name" value="B3/B4_tRNA-bd"/>
</dbReference>
<dbReference type="InterPro" id="IPR009061">
    <property type="entry name" value="DNA-bd_dom_put_sf"/>
</dbReference>
<dbReference type="InterPro" id="IPR005121">
    <property type="entry name" value="Fdx_antiC-bd"/>
</dbReference>
<dbReference type="InterPro" id="IPR036690">
    <property type="entry name" value="Fdx_antiC-bd_sf"/>
</dbReference>
<dbReference type="InterPro" id="IPR012340">
    <property type="entry name" value="NA-bd_OB-fold"/>
</dbReference>
<dbReference type="InterPro" id="IPR045060">
    <property type="entry name" value="Phe-tRNA-ligase_IIc_bsu"/>
</dbReference>
<dbReference type="InterPro" id="IPR004532">
    <property type="entry name" value="Phe-tRNA-ligase_IIc_bsu_bact"/>
</dbReference>
<dbReference type="InterPro" id="IPR020825">
    <property type="entry name" value="Phe-tRNA_synthase-like_B3/B4"/>
</dbReference>
<dbReference type="InterPro" id="IPR041616">
    <property type="entry name" value="PheRS_beta_core"/>
</dbReference>
<dbReference type="InterPro" id="IPR002547">
    <property type="entry name" value="tRNA-bd_dom"/>
</dbReference>
<dbReference type="InterPro" id="IPR033714">
    <property type="entry name" value="tRNA_bind_bactPheRS"/>
</dbReference>
<dbReference type="InterPro" id="IPR005147">
    <property type="entry name" value="tRNA_synthase_B5-dom"/>
</dbReference>
<dbReference type="NCBIfam" id="TIGR00472">
    <property type="entry name" value="pheT_bact"/>
    <property type="match status" value="1"/>
</dbReference>
<dbReference type="NCBIfam" id="NF045760">
    <property type="entry name" value="YtpR"/>
    <property type="match status" value="1"/>
</dbReference>
<dbReference type="PANTHER" id="PTHR10947:SF0">
    <property type="entry name" value="PHENYLALANINE--TRNA LIGASE BETA SUBUNIT"/>
    <property type="match status" value="1"/>
</dbReference>
<dbReference type="PANTHER" id="PTHR10947">
    <property type="entry name" value="PHENYLALANYL-TRNA SYNTHETASE BETA CHAIN AND LEUCINE-RICH REPEAT-CONTAINING PROTEIN 47"/>
    <property type="match status" value="1"/>
</dbReference>
<dbReference type="Pfam" id="PF03483">
    <property type="entry name" value="B3_4"/>
    <property type="match status" value="1"/>
</dbReference>
<dbReference type="Pfam" id="PF03484">
    <property type="entry name" value="B5"/>
    <property type="match status" value="1"/>
</dbReference>
<dbReference type="Pfam" id="PF03147">
    <property type="entry name" value="FDX-ACB"/>
    <property type="match status" value="1"/>
</dbReference>
<dbReference type="Pfam" id="PF01588">
    <property type="entry name" value="tRNA_bind"/>
    <property type="match status" value="1"/>
</dbReference>
<dbReference type="Pfam" id="PF17759">
    <property type="entry name" value="tRNA_synthFbeta"/>
    <property type="match status" value="1"/>
</dbReference>
<dbReference type="SMART" id="SM00873">
    <property type="entry name" value="B3_4"/>
    <property type="match status" value="1"/>
</dbReference>
<dbReference type="SMART" id="SM00874">
    <property type="entry name" value="B5"/>
    <property type="match status" value="1"/>
</dbReference>
<dbReference type="SMART" id="SM00896">
    <property type="entry name" value="FDX-ACB"/>
    <property type="match status" value="1"/>
</dbReference>
<dbReference type="SUPFAM" id="SSF54991">
    <property type="entry name" value="Anticodon-binding domain of PheRS"/>
    <property type="match status" value="1"/>
</dbReference>
<dbReference type="SUPFAM" id="SSF55681">
    <property type="entry name" value="Class II aaRS and biotin synthetases"/>
    <property type="match status" value="1"/>
</dbReference>
<dbReference type="SUPFAM" id="SSF50249">
    <property type="entry name" value="Nucleic acid-binding proteins"/>
    <property type="match status" value="1"/>
</dbReference>
<dbReference type="SUPFAM" id="SSF56037">
    <property type="entry name" value="PheT/TilS domain"/>
    <property type="match status" value="1"/>
</dbReference>
<dbReference type="SUPFAM" id="SSF46955">
    <property type="entry name" value="Putative DNA-binding domain"/>
    <property type="match status" value="1"/>
</dbReference>
<dbReference type="PROSITE" id="PS51483">
    <property type="entry name" value="B5"/>
    <property type="match status" value="1"/>
</dbReference>
<dbReference type="PROSITE" id="PS51447">
    <property type="entry name" value="FDX_ACB"/>
    <property type="match status" value="1"/>
</dbReference>
<dbReference type="PROSITE" id="PS50886">
    <property type="entry name" value="TRBD"/>
    <property type="match status" value="1"/>
</dbReference>
<feature type="chain" id="PRO_0000126990" description="Phenylalanine--tRNA ligase beta subunit">
    <location>
        <begin position="1"/>
        <end position="792"/>
    </location>
</feature>
<feature type="domain" description="tRNA-binding" evidence="1">
    <location>
        <begin position="39"/>
        <end position="147"/>
    </location>
</feature>
<feature type="domain" description="B5" evidence="1">
    <location>
        <begin position="400"/>
        <end position="475"/>
    </location>
</feature>
<feature type="domain" description="FDX-ACB" evidence="1">
    <location>
        <begin position="698"/>
        <end position="791"/>
    </location>
</feature>
<feature type="binding site" evidence="1">
    <location>
        <position position="453"/>
    </location>
    <ligand>
        <name>Mg(2+)</name>
        <dbReference type="ChEBI" id="CHEBI:18420"/>
        <note>shared with alpha subunit</note>
    </ligand>
</feature>
<feature type="binding site" evidence="1">
    <location>
        <position position="459"/>
    </location>
    <ligand>
        <name>Mg(2+)</name>
        <dbReference type="ChEBI" id="CHEBI:18420"/>
        <note>shared with alpha subunit</note>
    </ligand>
</feature>
<feature type="binding site" evidence="1">
    <location>
        <position position="462"/>
    </location>
    <ligand>
        <name>Mg(2+)</name>
        <dbReference type="ChEBI" id="CHEBI:18420"/>
        <note>shared with alpha subunit</note>
    </ligand>
</feature>
<feature type="binding site" evidence="1">
    <location>
        <position position="463"/>
    </location>
    <ligand>
        <name>Mg(2+)</name>
        <dbReference type="ChEBI" id="CHEBI:18420"/>
        <note>shared with alpha subunit</note>
    </ligand>
</feature>
<name>SYFB_XANOR</name>
<organism>
    <name type="scientific">Xanthomonas oryzae pv. oryzae (strain KACC10331 / KXO85)</name>
    <dbReference type="NCBI Taxonomy" id="291331"/>
    <lineage>
        <taxon>Bacteria</taxon>
        <taxon>Pseudomonadati</taxon>
        <taxon>Pseudomonadota</taxon>
        <taxon>Gammaproteobacteria</taxon>
        <taxon>Lysobacterales</taxon>
        <taxon>Lysobacteraceae</taxon>
        <taxon>Xanthomonas</taxon>
    </lineage>
</organism>
<sequence length="792" mass="84729">MKFSENWLRSHVPIQATRDELAATLTAIGLEVEEVIPLGESLGQVVVARIVEAMRHPEADRLQVCSVDAGQGELLQIVCGAPNARPGLVAPLALVGAKIGELTITAAKLRGVASNGMLCSAKELGLDSDAAGLFELPDDAPVGQALAEYLGLPDASIEIKLTPNRADCFSVRGIAFDVAAACASEVVAFDAGAVAPVSTRTLAVELDAGKDAPRYCGRVIEGIDPAAKTPVWLAERLRRSGVRPVSLLVDITQYVMLELGQPMHAFDLDTLHGPIGVRRSCAGEQLALLDGRQVTLDDSFLTIADAGRPVALAGLMGGLDTRVTETTRNVFLESAYFDPAAIMGRGRKLGLHTDAGHRFERGVDPALPPQAIEVATRLVLELAGGTPGPVVHAQLPQHLPQPARILLRRARIARVLGIQIDDVDVVRMLRALGMQLDAVAEGWEVMAPSRRFDIAIEEDLIEDLARIHGYDRVPTTLPGGASRIAMPSETQLDELSVRRQLVARELQETINYAFVDAALLERWQLTNGLVPLANPLSAELAIMRPCLLPGLVATLGRNAARQAGRVRLFELGKVFAAAADAGAAPQESQHVAAAVCGDALALQWGEAARKVDFHDVKGDLMALAAASGAQLEFQPSTQPFGHPGRSADIYRDGVCIGWIGQVHPRLAKALDIDVDVIAFELQLGPLVQRTLPCAGELSRFPSVRRDLAFLVPDEVSWAAVSASVRTTVGPLLREVQLFDRYVGQGVAPGFKSLAMGLILQDNSRTLTDRDVDAVVTDVVAVIEREHRARIRS</sequence>
<comment type="catalytic activity">
    <reaction evidence="1">
        <text>tRNA(Phe) + L-phenylalanine + ATP = L-phenylalanyl-tRNA(Phe) + AMP + diphosphate + H(+)</text>
        <dbReference type="Rhea" id="RHEA:19413"/>
        <dbReference type="Rhea" id="RHEA-COMP:9668"/>
        <dbReference type="Rhea" id="RHEA-COMP:9699"/>
        <dbReference type="ChEBI" id="CHEBI:15378"/>
        <dbReference type="ChEBI" id="CHEBI:30616"/>
        <dbReference type="ChEBI" id="CHEBI:33019"/>
        <dbReference type="ChEBI" id="CHEBI:58095"/>
        <dbReference type="ChEBI" id="CHEBI:78442"/>
        <dbReference type="ChEBI" id="CHEBI:78531"/>
        <dbReference type="ChEBI" id="CHEBI:456215"/>
        <dbReference type="EC" id="6.1.1.20"/>
    </reaction>
</comment>
<comment type="cofactor">
    <cofactor evidence="1">
        <name>Mg(2+)</name>
        <dbReference type="ChEBI" id="CHEBI:18420"/>
    </cofactor>
    <text evidence="1">Binds 2 magnesium ions per tetramer.</text>
</comment>
<comment type="subunit">
    <text evidence="1">Tetramer of two alpha and two beta subunits.</text>
</comment>
<comment type="subcellular location">
    <subcellularLocation>
        <location evidence="1">Cytoplasm</location>
    </subcellularLocation>
</comment>
<comment type="similarity">
    <text evidence="1">Belongs to the phenylalanyl-tRNA synthetase beta subunit family. Type 1 subfamily.</text>
</comment>
<evidence type="ECO:0000255" key="1">
    <source>
        <dbReference type="HAMAP-Rule" id="MF_00283"/>
    </source>
</evidence>
<proteinExistence type="inferred from homology"/>
<protein>
    <recommendedName>
        <fullName evidence="1">Phenylalanine--tRNA ligase beta subunit</fullName>
        <ecNumber evidence="1">6.1.1.20</ecNumber>
    </recommendedName>
    <alternativeName>
        <fullName evidence="1">Phenylalanyl-tRNA synthetase beta subunit</fullName>
        <shortName evidence="1">PheRS</shortName>
    </alternativeName>
</protein>